<comment type="function">
    <text evidence="3 4 6">Involved in the biosynthesis of the floral volatile isoeugenol (PubMed:16782809, PubMed:17241449, PubMed:19222805). Catalyzes the synthesis of the phenylpropene isoeugenol from coniferyl acetate (PubMed:16782809, PubMed:17241449, PubMed:19222805). Phenylpropenes are the primary constituents of various essential plant oils (PubMed:16782809). They are produced as antimicrobial and antianimal compounds, or as floral attractants of pollinators (PubMed:16782809). Isoeugenol is a characteristic aromatic constituent of spices and a floral volatile compound (PubMed:16782809).</text>
</comment>
<comment type="catalytic activity">
    <reaction evidence="3 4">
        <text>(E)-isoeugenol + acetate + NADP(+) = (E)-coniferyl acetate + NADPH</text>
        <dbReference type="Rhea" id="RHEA:24694"/>
        <dbReference type="ChEBI" id="CHEBI:30089"/>
        <dbReference type="ChEBI" id="CHEBI:47905"/>
        <dbReference type="ChEBI" id="CHEBI:50545"/>
        <dbReference type="ChEBI" id="CHEBI:57783"/>
        <dbReference type="ChEBI" id="CHEBI:58349"/>
        <dbReference type="EC" id="1.1.1.319"/>
    </reaction>
    <physiologicalReaction direction="right-to-left" evidence="3 4">
        <dbReference type="Rhea" id="RHEA:24696"/>
    </physiologicalReaction>
</comment>
<comment type="activity regulation">
    <text evidence="3">Inhibited by zinc and copper ions (PubMed:16782809). Repressed by 4-bromo-cinnamyl acetate (PubMed:16782809).</text>
</comment>
<comment type="biophysicochemical properties">
    <kinetics>
        <KM evidence="3">1.6 mM for coniferyl acetate (at pH 6.5 and 28 degrees Celsius)</KM>
        <KM evidence="5">226.1 uM for coniferyl acetate</KM>
        <KM evidence="3">73 uM for NADPH (at pH 6.5 and 28 degrees Celsius)</KM>
        <Vmax evidence="3">7.1 nmol/sec/mg enzyme (at pH 6.5 and 28 degrees Celsius)</Vmax>
        <Vmax evidence="5">35.7 nmol/sec/mg enzyme with coniferyl acetate as substrate</Vmax>
        <text evidence="5">kcat is 1.3 sec(-1) with coniferyl acetate as substrate.</text>
    </kinetics>
    <phDependence>
        <text evidence="3">Optimum pH is 6.5.</text>
    </phDependence>
</comment>
<comment type="pathway">
    <text evidence="3">Aromatic compound metabolism; phenylpropanoid biosynthesis.</text>
</comment>
<comment type="tissue specificity">
    <text evidence="3 7 8">Expressed in flowers, especially in corolla and tubes of petals, probably in both epidermal and mesophyll cell layers.</text>
</comment>
<comment type="developmental stage">
    <text evidence="7">In corollas, accumulates progressively during flower development, from buds to anthesis.</text>
</comment>
<comment type="induction">
    <text evidence="7 9 10">Up-regulated by EOBII (PubMed:20543029). Triggered by EOBI in flowers via the regulation of its promoter (PubMed:23275577). Circadian-regulation with peak levels occurring at the end of the light period in flowers; this expression is monitored by LHY binding and repression to cis-regulatory evening elements in its promoter (PubMed:26124104).</text>
</comment>
<comment type="disruption phenotype">
    <text evidence="6">Accumulation of eugenol but reduced isoeugenol levels in flowers.</text>
</comment>
<comment type="similarity">
    <text evidence="13">Belongs to the NmrA-type oxidoreductase family.</text>
</comment>
<gene>
    <name evidence="11 12" type="primary">IGS1</name>
</gene>
<proteinExistence type="evidence at protein level"/>
<organism>
    <name type="scientific">Petunia hybrida</name>
    <name type="common">Petunia</name>
    <dbReference type="NCBI Taxonomy" id="4102"/>
    <lineage>
        <taxon>Eukaryota</taxon>
        <taxon>Viridiplantae</taxon>
        <taxon>Streptophyta</taxon>
        <taxon>Embryophyta</taxon>
        <taxon>Tracheophyta</taxon>
        <taxon>Spermatophyta</taxon>
        <taxon>Magnoliopsida</taxon>
        <taxon>eudicotyledons</taxon>
        <taxon>Gunneridae</taxon>
        <taxon>Pentapetalae</taxon>
        <taxon>asterids</taxon>
        <taxon>lamiids</taxon>
        <taxon>Solanales</taxon>
        <taxon>Solanaceae</taxon>
        <taxon>Petunioideae</taxon>
        <taxon>Petunia</taxon>
    </lineage>
</organism>
<protein>
    <recommendedName>
        <fullName evidence="11 12">Isoeugenol synthase 1</fullName>
        <shortName evidence="12">PhIGS1</shortName>
        <ecNumber evidence="3 4">1.1.1.319</ecNumber>
    </recommendedName>
</protein>
<dbReference type="EC" id="1.1.1.319" evidence="3 4"/>
<dbReference type="EMBL" id="DQ372813">
    <property type="protein sequence ID" value="ABD17322.1"/>
    <property type="molecule type" value="mRNA"/>
</dbReference>
<dbReference type="SMR" id="Q15GI3"/>
<dbReference type="KEGG" id="ag:ABD17322"/>
<dbReference type="BioCyc" id="MetaCyc:MONOMER-13832"/>
<dbReference type="BRENDA" id="1.1.1.319">
    <property type="organism ID" value="4700"/>
</dbReference>
<dbReference type="SABIO-RK" id="Q15GI3"/>
<dbReference type="UniPathway" id="UPA00711"/>
<dbReference type="GO" id="GO:0000166">
    <property type="term" value="F:nucleotide binding"/>
    <property type="evidence" value="ECO:0007669"/>
    <property type="project" value="UniProtKB-KW"/>
</dbReference>
<dbReference type="GO" id="GO:0016491">
    <property type="term" value="F:oxidoreductase activity"/>
    <property type="evidence" value="ECO:0007669"/>
    <property type="project" value="UniProtKB-KW"/>
</dbReference>
<dbReference type="GO" id="GO:0007623">
    <property type="term" value="P:circadian rhythm"/>
    <property type="evidence" value="ECO:0000270"/>
    <property type="project" value="UniProtKB"/>
</dbReference>
<dbReference type="GO" id="GO:0009699">
    <property type="term" value="P:phenylpropanoid biosynthetic process"/>
    <property type="evidence" value="ECO:0007669"/>
    <property type="project" value="UniProtKB-UniPathway"/>
</dbReference>
<dbReference type="CDD" id="cd05259">
    <property type="entry name" value="PCBER_SDR_a"/>
    <property type="match status" value="1"/>
</dbReference>
<dbReference type="Gene3D" id="3.40.50.720">
    <property type="entry name" value="NAD(P)-binding Rossmann-like Domain"/>
    <property type="match status" value="1"/>
</dbReference>
<dbReference type="Gene3D" id="3.90.25.10">
    <property type="entry name" value="UDP-galactose 4-epimerase, domain 1"/>
    <property type="match status" value="1"/>
</dbReference>
<dbReference type="InterPro" id="IPR036291">
    <property type="entry name" value="NAD(P)-bd_dom_sf"/>
</dbReference>
<dbReference type="InterPro" id="IPR008030">
    <property type="entry name" value="NmrA-like"/>
</dbReference>
<dbReference type="InterPro" id="IPR050608">
    <property type="entry name" value="NmrA-type/Isoflavone_red_sf"/>
</dbReference>
<dbReference type="InterPro" id="IPR045312">
    <property type="entry name" value="PCBER-like"/>
</dbReference>
<dbReference type="PANTHER" id="PTHR43349:SF43">
    <property type="entry name" value="ISOEUGENOL SYNTHASE 1-LIKE"/>
    <property type="match status" value="1"/>
</dbReference>
<dbReference type="PANTHER" id="PTHR43349">
    <property type="entry name" value="PINORESINOL REDUCTASE-RELATED"/>
    <property type="match status" value="1"/>
</dbReference>
<dbReference type="Pfam" id="PF05368">
    <property type="entry name" value="NmrA"/>
    <property type="match status" value="1"/>
</dbReference>
<dbReference type="SUPFAM" id="SSF51735">
    <property type="entry name" value="NAD(P)-binding Rossmann-fold domains"/>
    <property type="match status" value="1"/>
</dbReference>
<evidence type="ECO:0000250" key="1">
    <source>
        <dbReference type="UniProtKB" id="D0VWT0"/>
    </source>
</evidence>
<evidence type="ECO:0000250" key="2">
    <source>
        <dbReference type="UniProtKB" id="Q15GI4"/>
    </source>
</evidence>
<evidence type="ECO:0000269" key="3">
    <source>
    </source>
</evidence>
<evidence type="ECO:0000269" key="4">
    <source>
    </source>
</evidence>
<evidence type="ECO:0000269" key="5">
    <source>
    </source>
</evidence>
<evidence type="ECO:0000269" key="6">
    <source>
    </source>
</evidence>
<evidence type="ECO:0000269" key="7">
    <source>
    </source>
</evidence>
<evidence type="ECO:0000269" key="8">
    <source>
    </source>
</evidence>
<evidence type="ECO:0000269" key="9">
    <source>
    </source>
</evidence>
<evidence type="ECO:0000269" key="10">
    <source>
    </source>
</evidence>
<evidence type="ECO:0000303" key="11">
    <source>
    </source>
</evidence>
<evidence type="ECO:0000303" key="12">
    <source>
    </source>
</evidence>
<evidence type="ECO:0000305" key="13"/>
<reference key="1">
    <citation type="journal article" date="2006" name="Proc. Natl. Acad. Sci. U.S.A.">
        <title>Eugenol and isoeugenol, characteristic aromatic constituents of spices, are biosynthesized via reduction of a coniferyl alcohol ester.</title>
        <authorList>
            <person name="Koeduka T."/>
            <person name="Fridman E."/>
            <person name="Gang D.R."/>
            <person name="Vassao D.G."/>
            <person name="Jackson B.L."/>
            <person name="Kish C.M."/>
            <person name="Orlova I."/>
            <person name="Spassova S.M."/>
            <person name="Lewis N.G."/>
            <person name="Noel J.P."/>
            <person name="Baiga T.J."/>
            <person name="Dudareva N."/>
            <person name="Pichersky E."/>
        </authorList>
    </citation>
    <scope>NUCLEOTIDE SEQUENCE [MRNA]</scope>
    <scope>FUNCTION</scope>
    <scope>TISSUE SPECIFICITY</scope>
    <scope>BIOPHYSICOCHEMICAL PROPERTIES</scope>
    <scope>ACTIVITY REGULATION</scope>
    <scope>CATALYTIC ACTIVITY</scope>
    <scope>PATHWAY</scope>
    <source>
        <strain>cv. Mitchell</strain>
        <tissue>Flower</tissue>
    </source>
</reference>
<reference key="2">
    <citation type="journal article" date="2007" name="Plant J.">
        <title>Characterization of a petunia acetyltransferase involved in the biosynthesis of the floral volatile isoeugenol.</title>
        <authorList>
            <person name="Dexter R."/>
            <person name="Qualley A."/>
            <person name="Kish C.M."/>
            <person name="Ma C.J."/>
            <person name="Koeduka T."/>
            <person name="Nagegowda D.A."/>
            <person name="Dudareva N."/>
            <person name="Pichersky E."/>
            <person name="Clark D."/>
        </authorList>
    </citation>
    <scope>FUNCTION</scope>
    <scope>CATALYTIC ACTIVITY</scope>
</reference>
<reference key="3">
    <citation type="journal article" date="2008" name="Plant J.">
        <title>The multiple phenylpropene synthases in both Clarkia breweri and Petunia hybrida represent two distinct protein lineages.</title>
        <authorList>
            <person name="Koeduka T."/>
            <person name="Louie G.V."/>
            <person name="Orlova I."/>
            <person name="Kish C.M."/>
            <person name="Ibdah M."/>
            <person name="Wilkerson C.G."/>
            <person name="Bowman M.E."/>
            <person name="Baiga T.J."/>
            <person name="Noel J.P."/>
            <person name="Dudareva N."/>
            <person name="Pichersky E."/>
        </authorList>
    </citation>
    <scope>MUTAGENESIS OF VAL-88 AND TYR-91</scope>
    <scope>BIOPHYSICOCHEMICAL PROPERTIES</scope>
    <scope>GENE FAMILY</scope>
    <scope>NOMENCLATURE</scope>
</reference>
<reference key="4">
    <citation type="journal article" date="2009" name="Plant J.">
        <title>The lack of floral synthesis and emission of isoeugenol in Petunia axillaris subsp. parodii is due to a mutation in the isoeugenol synthase gene.</title>
        <authorList>
            <person name="Koeduka T."/>
            <person name="Orlova I."/>
            <person name="Baiga T.J."/>
            <person name="Noel J.P."/>
            <person name="Dudareva N."/>
            <person name="Pichersky E."/>
        </authorList>
    </citation>
    <scope>FUNCTION</scope>
    <scope>DISRUPTION PHENOTYPE</scope>
</reference>
<reference key="5">
    <citation type="journal article" date="2010" name="Plant Cell">
        <title>EOBII, a gene encoding a flower-specific regulator of phenylpropanoid volatiles' biosynthesis in petunia.</title>
        <authorList>
            <person name="Spitzer-Rimon B."/>
            <person name="Marhevka E."/>
            <person name="Barkai O."/>
            <person name="Marton I."/>
            <person name="Edelbaum O."/>
            <person name="Masci T."/>
            <person name="Prathapani N.K."/>
            <person name="Shklarman E."/>
            <person name="Ovadis M."/>
            <person name="Vainstein A."/>
        </authorList>
    </citation>
    <scope>INDUCTION BY EOBII</scope>
    <scope>DEVELOPMENTAL STAGE</scope>
    <scope>TISSUE SPECIFICITY</scope>
    <source>
        <strain>cv. Violet 26</strain>
    </source>
</reference>
<reference key="6">
    <citation type="journal article" date="2012" name="J. Exp. Bot.">
        <title>Regulators of floral fragrance production and their target genes in petunia are not exclusively active in the epidermal cells of petals.</title>
        <authorList>
            <person name="Van Moerkercke A."/>
            <person name="Galvan-Ampudia C.S."/>
            <person name="Verdonk J.C."/>
            <person name="Haring M.A."/>
            <person name="Schuurink R.C."/>
        </authorList>
    </citation>
    <scope>TISSUE SPECIFICITY</scope>
    <source>
        <strain>cv. Mitchell</strain>
        <strain>cv. R27</strain>
    </source>
</reference>
<reference key="7">
    <citation type="journal article" date="2012" name="Plant Cell">
        <title>The R2R3-MYB-like regulatory factor EOBI, acting downstream of EOBII, regulates scent production by activating ODO1 and structural scent-related genes in petunia.</title>
        <authorList>
            <person name="Spitzer-Rimon B."/>
            <person name="Farhi M."/>
            <person name="Albo B."/>
            <person name="Cna'ani A."/>
            <person name="Ben Zvi M.M."/>
            <person name="Masci T."/>
            <person name="Edelbaum O."/>
            <person name="Yu Y."/>
            <person name="Shklarman E."/>
            <person name="Ovadis M."/>
            <person name="Vainstein A."/>
        </authorList>
    </citation>
    <scope>INDUCTION BY EOBI</scope>
    <source>
        <strain>cv. W115</strain>
    </source>
</reference>
<reference key="8">
    <citation type="journal article" date="2015" name="Proc. Natl. Acad. Sci. U.S.A.">
        <title>Circadian clock gene LATE ELONGATED HYPOCOTYL directly regulates the timing of floral scent emission in Petunia.</title>
        <authorList>
            <person name="Fenske M.P."/>
            <person name="Hewett Hazelton K.D."/>
            <person name="Hempton A.K."/>
            <person name="Shim J.S."/>
            <person name="Yamamoto B.M."/>
            <person name="Riffell J.A."/>
            <person name="Imaizumi T."/>
        </authorList>
    </citation>
    <scope>REPRESSION BY LHY</scope>
</reference>
<sequence>MTTGKGKILILGATGYLGKYMVKASISLGHPTYAYVMPLKKNSDDSKLQLLKEFESLGVTIFYGELSEHDKLVAVFKEVDIVISTLAVPQYLEQLKVIEAIKEAGNIKRFVPSEFGNEVDRVRALPRFQAVLDNKKKIRRATEAAGIPFTFVSANSLTAYFVDYLLHPRQKSEQVTIYGSGDAKAVLNYEEDVAAYTIKAADDPRAANRVLIIKPPKNIVSQLDLVSSWEKTTGSTLKMTHISEQEIIKLSESINFPENIHASILHNIFIAGAQLSFELTQDHDLEASELYPNYNYTSVDEYLKICLVNPPKPKLATYAQPST</sequence>
<accession>Q15GI3</accession>
<keyword id="KW-0521">NADP</keyword>
<keyword id="KW-0547">Nucleotide-binding</keyword>
<keyword id="KW-0560">Oxidoreductase</keyword>
<keyword id="KW-0587">Phenylpropanoid metabolism</keyword>
<name>IGS1_PETHY</name>
<feature type="chain" id="PRO_0000314577" description="Isoeugenol synthase 1">
    <location>
        <begin position="1"/>
        <end position="323"/>
    </location>
</feature>
<feature type="active site" description="Proton donor/acceptor" evidence="2">
    <location>
        <position position="135"/>
    </location>
</feature>
<feature type="binding site" evidence="1">
    <location>
        <begin position="14"/>
        <end position="17"/>
    </location>
    <ligand>
        <name>NADP(+)</name>
        <dbReference type="ChEBI" id="CHEBI:58349"/>
    </ligand>
</feature>
<feature type="binding site" evidence="2">
    <location>
        <begin position="36"/>
        <end position="47"/>
    </location>
    <ligand>
        <name>NADP(+)</name>
        <dbReference type="ChEBI" id="CHEBI:58349"/>
    </ligand>
</feature>
<feature type="binding site" evidence="2">
    <location>
        <begin position="88"/>
        <end position="90"/>
    </location>
    <ligand>
        <name>NADP(+)</name>
        <dbReference type="ChEBI" id="CHEBI:58349"/>
    </ligand>
</feature>
<feature type="binding site" evidence="1">
    <location>
        <begin position="113"/>
        <end position="115"/>
    </location>
    <ligand>
        <name>NADP(+)</name>
        <dbReference type="ChEBI" id="CHEBI:58349"/>
    </ligand>
</feature>
<feature type="binding site" evidence="1">
    <location>
        <position position="135"/>
    </location>
    <ligand>
        <name>NADP(+)</name>
        <dbReference type="ChEBI" id="CHEBI:58349"/>
    </ligand>
</feature>
<feature type="binding site" evidence="1">
    <location>
        <begin position="155"/>
        <end position="157"/>
    </location>
    <ligand>
        <name>NADP(+)</name>
        <dbReference type="ChEBI" id="CHEBI:58349"/>
    </ligand>
</feature>
<feature type="site" description="Confers substrate specificity" evidence="5">
    <location>
        <position position="88"/>
    </location>
</feature>
<feature type="site" description="Confers substrate specificity" evidence="5">
    <location>
        <position position="91"/>
    </location>
</feature>
<feature type="site" description="Required for activity" evidence="2">
    <location>
        <position position="264"/>
    </location>
</feature>
<feature type="mutagenesis site" description="Confers some eugenol synthase activity; when associated with I-91." evidence="5">
    <original>V</original>
    <variation>F</variation>
    <location>
        <position position="88"/>
    </location>
</feature>
<feature type="mutagenesis site" description="Confers some eugenol synthase activity; when associated with F-88." evidence="5">
    <original>Y</original>
    <variation>I</variation>
    <location>
        <position position="91"/>
    </location>
</feature>